<feature type="initiator methionine" description="Removed" evidence="20">
    <location>
        <position position="1"/>
    </location>
</feature>
<feature type="chain" id="PRO_0000058171" description="Phosphofurin acidic cluster sorting protein 1">
    <location>
        <begin position="2"/>
        <end position="963"/>
    </location>
</feature>
<feature type="region of interest" description="Disordered" evidence="4">
    <location>
        <begin position="1"/>
        <end position="72"/>
    </location>
</feature>
<feature type="region of interest" description="Disordered" evidence="4">
    <location>
        <begin position="78"/>
        <end position="97"/>
    </location>
</feature>
<feature type="region of interest" description="Involved in binding to AP-1">
    <location>
        <begin position="168"/>
        <end position="175"/>
    </location>
</feature>
<feature type="region of interest" description="Disordered" evidence="4">
    <location>
        <begin position="262"/>
        <end position="299"/>
    </location>
</feature>
<feature type="region of interest" description="Disordered" evidence="4">
    <location>
        <begin position="377"/>
        <end position="428"/>
    </location>
</feature>
<feature type="region of interest" description="Disordered" evidence="4">
    <location>
        <begin position="476"/>
        <end position="542"/>
    </location>
</feature>
<feature type="region of interest" description="Disordered" evidence="4">
    <location>
        <begin position="760"/>
        <end position="804"/>
    </location>
</feature>
<feature type="coiled-coil region" evidence="3">
    <location>
        <begin position="353"/>
        <end position="377"/>
    </location>
</feature>
<feature type="compositionally biased region" description="Gly residues" evidence="4">
    <location>
        <begin position="1"/>
        <end position="22"/>
    </location>
</feature>
<feature type="compositionally biased region" description="Low complexity" evidence="4">
    <location>
        <begin position="53"/>
        <end position="72"/>
    </location>
</feature>
<feature type="compositionally biased region" description="Basic and acidic residues" evidence="4">
    <location>
        <begin position="262"/>
        <end position="273"/>
    </location>
</feature>
<feature type="compositionally biased region" description="Acidic residues" evidence="4">
    <location>
        <begin position="276"/>
        <end position="293"/>
    </location>
</feature>
<feature type="compositionally biased region" description="Polar residues" evidence="4">
    <location>
        <begin position="406"/>
        <end position="428"/>
    </location>
</feature>
<feature type="compositionally biased region" description="Polar residues" evidence="4">
    <location>
        <begin position="483"/>
        <end position="496"/>
    </location>
</feature>
<feature type="compositionally biased region" description="Low complexity" evidence="4">
    <location>
        <begin position="770"/>
        <end position="804"/>
    </location>
</feature>
<feature type="modified residue" description="N-acetylalanine" evidence="20">
    <location>
        <position position="2"/>
    </location>
</feature>
<feature type="modified residue" description="Phosphoserine" evidence="2">
    <location>
        <position position="28"/>
    </location>
</feature>
<feature type="modified residue" description="Phosphothreonine" evidence="2">
    <location>
        <position position="46"/>
    </location>
</feature>
<feature type="modified residue" description="Phosphotyrosine" evidence="2">
    <location>
        <position position="251"/>
    </location>
</feature>
<feature type="modified residue" description="Phosphoserine" evidence="19">
    <location>
        <position position="379"/>
    </location>
</feature>
<feature type="modified residue" description="Phosphoserine" evidence="23">
    <location>
        <position position="381"/>
    </location>
</feature>
<feature type="modified residue" description="Phosphoserine" evidence="19 22">
    <location>
        <position position="430"/>
    </location>
</feature>
<feature type="modified residue" description="Phosphoserine" evidence="22">
    <location>
        <position position="495"/>
    </location>
</feature>
<feature type="modified residue" description="Phosphothreonine" evidence="19 22">
    <location>
        <position position="504"/>
    </location>
</feature>
<feature type="modified residue" description="Phosphoserine" evidence="22">
    <location>
        <position position="519"/>
    </location>
</feature>
<feature type="modified residue" description="Phosphoserine" evidence="1">
    <location>
        <position position="528"/>
    </location>
</feature>
<feature type="modified residue" description="Phosphoserine" evidence="19 22">
    <location>
        <position position="529"/>
    </location>
</feature>
<feature type="modified residue" description="Phosphoserine" evidence="21">
    <location>
        <position position="531"/>
    </location>
</feature>
<feature type="modified residue" description="Phosphoserine" evidence="19 22">
    <location>
        <position position="534"/>
    </location>
</feature>
<feature type="splice variant" id="VSP_011557" description="In isoform 2." evidence="16">
    <original>AKQQQTMLRVSIDGVEWSDIKFFQLAAQWPTHVKHFPVGLFSGSKAT</original>
    <variation>SPSLGPSLGPDPSSQPGFPPAGSFPPCHLPLTNPGSEPLIPDRPCSQEWLRTQGPSPALCTPQPGHLRPTAPLELFSCPLTPSQKFLHRTSF</variation>
    <location>
        <begin position="917"/>
        <end position="963"/>
    </location>
</feature>
<feature type="sequence variant" id="VAR_069534" description="In SHMS; dbSNP:rs398123009." evidence="14">
    <original>R</original>
    <variation>W</variation>
    <location>
        <position position="203"/>
    </location>
</feature>
<feature type="sequence variant" id="VAR_053797" description="In dbSNP:rs12798852.">
    <original>F</original>
    <variation>L</variation>
    <location>
        <position position="302"/>
    </location>
</feature>
<feature type="sequence conflict" description="In Ref. 2; BAC04831." evidence="17" ref="2">
    <location>
        <begin position="171"/>
        <end position="220"/>
    </location>
</feature>
<feature type="sequence conflict" description="In Ref. 2; BAA91491." evidence="17" ref="2">
    <original>K</original>
    <variation>M</variation>
    <location>
        <position position="649"/>
    </location>
</feature>
<feature type="sequence conflict" description="In Ref. 2; BAC04831." evidence="17" ref="2">
    <original>P</original>
    <variation>S</variation>
    <location>
        <position position="771"/>
    </location>
</feature>
<feature type="sequence conflict" description="In Ref. 1; AAQ67682." evidence="17" ref="1">
    <original>S</original>
    <variation>N</variation>
    <location>
        <position position="803"/>
    </location>
</feature>
<feature type="sequence conflict" description="In Ref. 1; AAQ67682." evidence="17" ref="1">
    <original>K</original>
    <variation>L</variation>
    <location>
        <position position="882"/>
    </location>
</feature>
<proteinExistence type="evidence at protein level"/>
<name>PACS1_HUMAN</name>
<dbReference type="EMBL" id="AY320283">
    <property type="protein sequence ID" value="AAQ67682.1"/>
    <property type="molecule type" value="mRNA"/>
</dbReference>
<dbReference type="EMBL" id="AK001071">
    <property type="protein sequence ID" value="BAA91491.1"/>
    <property type="molecule type" value="mRNA"/>
</dbReference>
<dbReference type="EMBL" id="AK056361">
    <property type="protein sequence ID" value="BAB71164.1"/>
    <property type="status" value="ALT_INIT"/>
    <property type="molecule type" value="mRNA"/>
</dbReference>
<dbReference type="EMBL" id="AK096644">
    <property type="protein sequence ID" value="BAC04831.1"/>
    <property type="molecule type" value="mRNA"/>
</dbReference>
<dbReference type="EMBL" id="BC003173">
    <property type="protein sequence ID" value="AAH03173.1"/>
    <property type="molecule type" value="mRNA"/>
</dbReference>
<dbReference type="EMBL" id="BC010096">
    <property type="protein sequence ID" value="AAH10096.1"/>
    <property type="molecule type" value="mRNA"/>
</dbReference>
<dbReference type="EMBL" id="BC009936">
    <property type="protein sequence ID" value="AAH09936.1"/>
    <property type="status" value="ALT_INIT"/>
    <property type="molecule type" value="mRNA"/>
</dbReference>
<dbReference type="EMBL" id="BC052577">
    <property type="protein sequence ID" value="AAH52577.1"/>
    <property type="molecule type" value="mRNA"/>
</dbReference>
<dbReference type="EMBL" id="BC055288">
    <property type="protein sequence ID" value="AAH55288.1"/>
    <property type="molecule type" value="mRNA"/>
</dbReference>
<dbReference type="EMBL" id="AB033001">
    <property type="protein sequence ID" value="BAA86489.1"/>
    <property type="molecule type" value="mRNA"/>
</dbReference>
<dbReference type="CCDS" id="CCDS8129.1">
    <molecule id="Q6VY07-1"/>
</dbReference>
<dbReference type="RefSeq" id="NP_060496.2">
    <molecule id="Q6VY07-1"/>
    <property type="nucleotide sequence ID" value="NM_018026.3"/>
</dbReference>
<dbReference type="BioGRID" id="120816">
    <property type="interactions" value="51"/>
</dbReference>
<dbReference type="CORUM" id="Q6VY07"/>
<dbReference type="FunCoup" id="Q6VY07">
    <property type="interactions" value="1561"/>
</dbReference>
<dbReference type="IntAct" id="Q6VY07">
    <property type="interactions" value="34"/>
</dbReference>
<dbReference type="MINT" id="Q6VY07"/>
<dbReference type="STRING" id="9606.ENSP00000316454"/>
<dbReference type="GlyCosmos" id="Q6VY07">
    <property type="glycosylation" value="3 sites, 1 glycan"/>
</dbReference>
<dbReference type="GlyGen" id="Q6VY07">
    <property type="glycosylation" value="4 sites, 1 O-linked glycan (3 sites)"/>
</dbReference>
<dbReference type="iPTMnet" id="Q6VY07"/>
<dbReference type="PhosphoSitePlus" id="Q6VY07"/>
<dbReference type="BioMuta" id="PACS1"/>
<dbReference type="DMDM" id="52000804"/>
<dbReference type="jPOST" id="Q6VY07"/>
<dbReference type="MassIVE" id="Q6VY07"/>
<dbReference type="PaxDb" id="9606-ENSP00000316454"/>
<dbReference type="PeptideAtlas" id="Q6VY07"/>
<dbReference type="ProteomicsDB" id="67734">
    <molecule id="Q6VY07-1"/>
</dbReference>
<dbReference type="ProteomicsDB" id="67735">
    <molecule id="Q6VY07-2"/>
</dbReference>
<dbReference type="Pumba" id="Q6VY07"/>
<dbReference type="ABCD" id="Q6VY07">
    <property type="antibodies" value="12 sequenced antibodies"/>
</dbReference>
<dbReference type="Antibodypedia" id="44366">
    <property type="antibodies" value="95 antibodies from 27 providers"/>
</dbReference>
<dbReference type="DNASU" id="55690"/>
<dbReference type="Ensembl" id="ENST00000320580.9">
    <molecule id="Q6VY07-1"/>
    <property type="protein sequence ID" value="ENSP00000316454.4"/>
    <property type="gene ID" value="ENSG00000175115.13"/>
</dbReference>
<dbReference type="GeneID" id="55690"/>
<dbReference type="KEGG" id="hsa:55690"/>
<dbReference type="MANE-Select" id="ENST00000320580.9">
    <property type="protein sequence ID" value="ENSP00000316454.4"/>
    <property type="RefSeq nucleotide sequence ID" value="NM_018026.4"/>
    <property type="RefSeq protein sequence ID" value="NP_060496.2"/>
</dbReference>
<dbReference type="UCSC" id="uc001oha.3">
    <molecule id="Q6VY07-1"/>
    <property type="organism name" value="human"/>
</dbReference>
<dbReference type="AGR" id="HGNC:30032"/>
<dbReference type="CTD" id="55690"/>
<dbReference type="DisGeNET" id="55690"/>
<dbReference type="GeneCards" id="PACS1"/>
<dbReference type="GeneReviews" id="PACS1"/>
<dbReference type="HGNC" id="HGNC:30032">
    <property type="gene designation" value="PACS1"/>
</dbReference>
<dbReference type="HPA" id="ENSG00000175115">
    <property type="expression patterns" value="Low tissue specificity"/>
</dbReference>
<dbReference type="MalaCards" id="PACS1"/>
<dbReference type="MIM" id="607492">
    <property type="type" value="gene"/>
</dbReference>
<dbReference type="MIM" id="615009">
    <property type="type" value="phenotype"/>
</dbReference>
<dbReference type="neXtProt" id="NX_Q6VY07"/>
<dbReference type="OpenTargets" id="ENSG00000175115"/>
<dbReference type="Orphanet" id="329224">
    <property type="disease" value="Schuurs-Hoeijmakers syndrome"/>
</dbReference>
<dbReference type="PharmGKB" id="PA134989529"/>
<dbReference type="VEuPathDB" id="HostDB:ENSG00000175115"/>
<dbReference type="eggNOG" id="KOG3709">
    <property type="taxonomic scope" value="Eukaryota"/>
</dbReference>
<dbReference type="GeneTree" id="ENSGT00950000183209"/>
<dbReference type="HOGENOM" id="CLU_013074_0_0_1"/>
<dbReference type="InParanoid" id="Q6VY07"/>
<dbReference type="OMA" id="TSAITRX"/>
<dbReference type="OrthoDB" id="28829at2759"/>
<dbReference type="PAN-GO" id="Q6VY07">
    <property type="GO annotations" value="2 GO annotations based on evolutionary models"/>
</dbReference>
<dbReference type="PhylomeDB" id="Q6VY07"/>
<dbReference type="TreeFam" id="TF314240"/>
<dbReference type="PathwayCommons" id="Q6VY07"/>
<dbReference type="Reactome" id="R-HSA-164940">
    <property type="pathway name" value="Nef mediated downregulation of MHC class I complex cell surface expression"/>
</dbReference>
<dbReference type="SignaLink" id="Q6VY07"/>
<dbReference type="SIGNOR" id="Q6VY07"/>
<dbReference type="BioGRID-ORCS" id="55690">
    <property type="hits" value="29 hits in 1155 CRISPR screens"/>
</dbReference>
<dbReference type="CD-CODE" id="FB4E32DD">
    <property type="entry name" value="Presynaptic clusters and postsynaptic densities"/>
</dbReference>
<dbReference type="ChiTaRS" id="PACS1">
    <property type="organism name" value="human"/>
</dbReference>
<dbReference type="GeneWiki" id="PACS1"/>
<dbReference type="GenomeRNAi" id="55690"/>
<dbReference type="Pharos" id="Q6VY07">
    <property type="development level" value="Tbio"/>
</dbReference>
<dbReference type="PRO" id="PR:Q6VY07"/>
<dbReference type="Proteomes" id="UP000005640">
    <property type="component" value="Chromosome 11"/>
</dbReference>
<dbReference type="RNAct" id="Q6VY07">
    <property type="molecule type" value="protein"/>
</dbReference>
<dbReference type="Bgee" id="ENSG00000175115">
    <property type="expression patterns" value="Expressed in cortical plate and 179 other cell types or tissues"/>
</dbReference>
<dbReference type="ExpressionAtlas" id="Q6VY07">
    <property type="expression patterns" value="baseline and differential"/>
</dbReference>
<dbReference type="GO" id="GO:0030137">
    <property type="term" value="C:COPI-coated vesicle"/>
    <property type="evidence" value="ECO:0007669"/>
    <property type="project" value="Ensembl"/>
</dbReference>
<dbReference type="GO" id="GO:0005829">
    <property type="term" value="C:cytosol"/>
    <property type="evidence" value="ECO:0000304"/>
    <property type="project" value="Reactome"/>
</dbReference>
<dbReference type="GO" id="GO:0005794">
    <property type="term" value="C:Golgi apparatus"/>
    <property type="evidence" value="ECO:0007669"/>
    <property type="project" value="UniProtKB-SubCell"/>
</dbReference>
<dbReference type="GO" id="GO:0044325">
    <property type="term" value="F:transmembrane transporter binding"/>
    <property type="evidence" value="ECO:0000353"/>
    <property type="project" value="BHF-UCL"/>
</dbReference>
<dbReference type="GO" id="GO:0002260">
    <property type="term" value="P:lymphocyte homeostasis"/>
    <property type="evidence" value="ECO:0000250"/>
    <property type="project" value="UniProtKB"/>
</dbReference>
<dbReference type="GO" id="GO:0034067">
    <property type="term" value="P:protein localization to Golgi apparatus"/>
    <property type="evidence" value="ECO:0007669"/>
    <property type="project" value="Ensembl"/>
</dbReference>
<dbReference type="GO" id="GO:0072659">
    <property type="term" value="P:protein localization to plasma membrane"/>
    <property type="evidence" value="ECO:0000315"/>
    <property type="project" value="BHF-UCL"/>
</dbReference>
<dbReference type="InterPro" id="IPR019381">
    <property type="entry name" value="Phosphofurin_acidic_CS-1"/>
</dbReference>
<dbReference type="PANTHER" id="PTHR13280">
    <property type="entry name" value="PHOSPHOFURIN ACIDIC CLUSTER SORTING PROTEIN"/>
    <property type="match status" value="1"/>
</dbReference>
<dbReference type="PANTHER" id="PTHR13280:SF16">
    <property type="entry name" value="PHOSPHOFURIN ACIDIC CLUSTER SORTING PROTEIN 1"/>
    <property type="match status" value="1"/>
</dbReference>
<dbReference type="Pfam" id="PF25332">
    <property type="entry name" value="C2_PACS_N"/>
    <property type="match status" value="1"/>
</dbReference>
<dbReference type="Pfam" id="PF10254">
    <property type="entry name" value="Pacs-1"/>
    <property type="match status" value="1"/>
</dbReference>
<dbReference type="SUPFAM" id="SSF81995">
    <property type="entry name" value="beta-sandwich domain of Sec23/24"/>
    <property type="match status" value="1"/>
</dbReference>
<reference key="1">
    <citation type="submission" date="2003-06" db="EMBL/GenBank/DDBJ databases">
        <title>Human PACS-1, a endosome-TGN sorting connector.</title>
        <authorList>
            <person name="Wan L."/>
            <person name="Xiang Y."/>
            <person name="Simmen T."/>
            <person name="Thomas G."/>
        </authorList>
    </citation>
    <scope>NUCLEOTIDE SEQUENCE [MRNA] (ISOFORM 1)</scope>
</reference>
<reference key="2">
    <citation type="journal article" date="2004" name="Nat. Genet.">
        <title>Complete sequencing and characterization of 21,243 full-length human cDNAs.</title>
        <authorList>
            <person name="Ota T."/>
            <person name="Suzuki Y."/>
            <person name="Nishikawa T."/>
            <person name="Otsuki T."/>
            <person name="Sugiyama T."/>
            <person name="Irie R."/>
            <person name="Wakamatsu A."/>
            <person name="Hayashi K."/>
            <person name="Sato H."/>
            <person name="Nagai K."/>
            <person name="Kimura K."/>
            <person name="Makita H."/>
            <person name="Sekine M."/>
            <person name="Obayashi M."/>
            <person name="Nishi T."/>
            <person name="Shibahara T."/>
            <person name="Tanaka T."/>
            <person name="Ishii S."/>
            <person name="Yamamoto J."/>
            <person name="Saito K."/>
            <person name="Kawai Y."/>
            <person name="Isono Y."/>
            <person name="Nakamura Y."/>
            <person name="Nagahari K."/>
            <person name="Murakami K."/>
            <person name="Yasuda T."/>
            <person name="Iwayanagi T."/>
            <person name="Wagatsuma M."/>
            <person name="Shiratori A."/>
            <person name="Sudo H."/>
            <person name="Hosoiri T."/>
            <person name="Kaku Y."/>
            <person name="Kodaira H."/>
            <person name="Kondo H."/>
            <person name="Sugawara M."/>
            <person name="Takahashi M."/>
            <person name="Kanda K."/>
            <person name="Yokoi T."/>
            <person name="Furuya T."/>
            <person name="Kikkawa E."/>
            <person name="Omura Y."/>
            <person name="Abe K."/>
            <person name="Kamihara K."/>
            <person name="Katsuta N."/>
            <person name="Sato K."/>
            <person name="Tanikawa M."/>
            <person name="Yamazaki M."/>
            <person name="Ninomiya K."/>
            <person name="Ishibashi T."/>
            <person name="Yamashita H."/>
            <person name="Murakawa K."/>
            <person name="Fujimori K."/>
            <person name="Tanai H."/>
            <person name="Kimata M."/>
            <person name="Watanabe M."/>
            <person name="Hiraoka S."/>
            <person name="Chiba Y."/>
            <person name="Ishida S."/>
            <person name="Ono Y."/>
            <person name="Takiguchi S."/>
            <person name="Watanabe S."/>
            <person name="Yosida M."/>
            <person name="Hotuta T."/>
            <person name="Kusano J."/>
            <person name="Kanehori K."/>
            <person name="Takahashi-Fujii A."/>
            <person name="Hara H."/>
            <person name="Tanase T.-O."/>
            <person name="Nomura Y."/>
            <person name="Togiya S."/>
            <person name="Komai F."/>
            <person name="Hara R."/>
            <person name="Takeuchi K."/>
            <person name="Arita M."/>
            <person name="Imose N."/>
            <person name="Musashino K."/>
            <person name="Yuuki H."/>
            <person name="Oshima A."/>
            <person name="Sasaki N."/>
            <person name="Aotsuka S."/>
            <person name="Yoshikawa Y."/>
            <person name="Matsunawa H."/>
            <person name="Ichihara T."/>
            <person name="Shiohata N."/>
            <person name="Sano S."/>
            <person name="Moriya S."/>
            <person name="Momiyama H."/>
            <person name="Satoh N."/>
            <person name="Takami S."/>
            <person name="Terashima Y."/>
            <person name="Suzuki O."/>
            <person name="Nakagawa S."/>
            <person name="Senoh A."/>
            <person name="Mizoguchi H."/>
            <person name="Goto Y."/>
            <person name="Shimizu F."/>
            <person name="Wakebe H."/>
            <person name="Hishigaki H."/>
            <person name="Watanabe T."/>
            <person name="Sugiyama A."/>
            <person name="Takemoto M."/>
            <person name="Kawakami B."/>
            <person name="Yamazaki M."/>
            <person name="Watanabe K."/>
            <person name="Kumagai A."/>
            <person name="Itakura S."/>
            <person name="Fukuzumi Y."/>
            <person name="Fujimori Y."/>
            <person name="Komiyama M."/>
            <person name="Tashiro H."/>
            <person name="Tanigami A."/>
            <person name="Fujiwara T."/>
            <person name="Ono T."/>
            <person name="Yamada K."/>
            <person name="Fujii Y."/>
            <person name="Ozaki K."/>
            <person name="Hirao M."/>
            <person name="Ohmori Y."/>
            <person name="Kawabata A."/>
            <person name="Hikiji T."/>
            <person name="Kobatake N."/>
            <person name="Inagaki H."/>
            <person name="Ikema Y."/>
            <person name="Okamoto S."/>
            <person name="Okitani R."/>
            <person name="Kawakami T."/>
            <person name="Noguchi S."/>
            <person name="Itoh T."/>
            <person name="Shigeta K."/>
            <person name="Senba T."/>
            <person name="Matsumura K."/>
            <person name="Nakajima Y."/>
            <person name="Mizuno T."/>
            <person name="Morinaga M."/>
            <person name="Sasaki M."/>
            <person name="Togashi T."/>
            <person name="Oyama M."/>
            <person name="Hata H."/>
            <person name="Watanabe M."/>
            <person name="Komatsu T."/>
            <person name="Mizushima-Sugano J."/>
            <person name="Satoh T."/>
            <person name="Shirai Y."/>
            <person name="Takahashi Y."/>
            <person name="Nakagawa K."/>
            <person name="Okumura K."/>
            <person name="Nagase T."/>
            <person name="Nomura N."/>
            <person name="Kikuchi H."/>
            <person name="Masuho Y."/>
            <person name="Yamashita R."/>
            <person name="Nakai K."/>
            <person name="Yada T."/>
            <person name="Nakamura Y."/>
            <person name="Ohara O."/>
            <person name="Isogai T."/>
            <person name="Sugano S."/>
        </authorList>
    </citation>
    <scope>NUCLEOTIDE SEQUENCE [LARGE SCALE MRNA] (ISOFORM 2)</scope>
    <source>
        <tissue>Embryo</tissue>
        <tissue>Fetal brain</tissue>
    </source>
</reference>
<reference key="3">
    <citation type="journal article" date="2004" name="Genome Res.">
        <title>The status, quality, and expansion of the NIH full-length cDNA project: the Mammalian Gene Collection (MGC).</title>
        <authorList>
            <consortium name="The MGC Project Team"/>
        </authorList>
    </citation>
    <scope>NUCLEOTIDE SEQUENCE [LARGE SCALE MRNA] (ISOFORM 1)</scope>
    <source>
        <tissue>Brain</tissue>
        <tissue>Kidney</tissue>
        <tissue>Uterus</tissue>
    </source>
</reference>
<reference key="4">
    <citation type="journal article" date="1999" name="DNA Res.">
        <title>Characterization of cDNA clones selected by the GeneMark analysis from size-fractionated cDNA libraries from human brain.</title>
        <authorList>
            <person name="Hirosawa M."/>
            <person name="Nagase T."/>
            <person name="Ishikawa K."/>
            <person name="Kikuno R."/>
            <person name="Nomura N."/>
            <person name="Ohara O."/>
        </authorList>
    </citation>
    <scope>NUCLEOTIDE SEQUENCE [LARGE SCALE MRNA] OF 323-963 (ISOFORM 1)</scope>
    <source>
        <tissue>Brain</tissue>
    </source>
</reference>
<reference key="5">
    <citation type="journal article" date="2001" name="EMBO J.">
        <title>PACS-1 binding to adaptors is required for acidic cluster motif-mediated protein traffic.</title>
        <authorList>
            <person name="Crump C.M."/>
            <person name="Xiang Y."/>
            <person name="Thomas L."/>
            <person name="Gu F."/>
            <person name="Austin C."/>
            <person name="Tooze S.A."/>
            <person name="Thomas G."/>
        </authorList>
    </citation>
    <scope>FUNCTION</scope>
    <scope>SUBUNIT</scope>
</reference>
<reference key="6">
    <citation type="journal article" date="2000" name="Nat. Cell Biol.">
        <title>HIV-1 Nef protein binds to the cellular protein PACS-1 to downregulate class I major histocompatibility complexes.</title>
        <authorList>
            <person name="Piguet V."/>
            <person name="Wan L."/>
            <person name="Borel C."/>
            <person name="Mangasarian A."/>
            <person name="Demaurex N."/>
            <person name="Thomas G."/>
            <person name="Trono D."/>
        </authorList>
    </citation>
    <scope>INTERACTION WITH HIV-1 NEF (MICROBIAL INFECTION)</scope>
</reference>
<reference key="7">
    <citation type="journal article" date="2002" name="Cell">
        <title>HIV-1 Nef downregulates MHC-I by a PACS-1- and PI3K-regulated ARF6 endocytic pathway.</title>
        <authorList>
            <person name="Blagoveshchenskaya A.D."/>
            <person name="Thomas L."/>
            <person name="Feliciangeli S.F."/>
            <person name="Hung C.-H."/>
            <person name="Thomas G."/>
        </authorList>
    </citation>
    <scope>INTERACTION WITH HIV-1 NEF (MICROBIAL INFECTION)</scope>
</reference>
<reference key="8">
    <citation type="journal article" date="2005" name="EMBO J.">
        <title>Trafficking of TRPP2 by PACS proteins represents a novel mechanism of ion channel regulation.</title>
        <authorList>
            <person name="Koettgen M."/>
            <person name="Benzing T."/>
            <person name="Simmen T."/>
            <person name="Tauber R."/>
            <person name="Buchholz B."/>
            <person name="Feliciangeli S."/>
            <person name="Huber T.B."/>
            <person name="Schermer B."/>
            <person name="Kramer-Zucker A."/>
            <person name="Hoepker K."/>
            <person name="Simmen K.C."/>
            <person name="Tschucke C.C."/>
            <person name="Sandford R."/>
            <person name="Kim E."/>
            <person name="Thomas G."/>
            <person name="Walz G."/>
        </authorList>
    </citation>
    <scope>INTERACTION WITH PKD2</scope>
    <scope>FUNCTION</scope>
</reference>
<reference key="9">
    <citation type="journal article" date="2005" name="EMBO J.">
        <title>Phosphorylation by casein kinase 2 induces PACS-1 binding of nephrocystin and targeting to cilia.</title>
        <authorList>
            <person name="Schermer B."/>
            <person name="Hoepker K."/>
            <person name="Omran H."/>
            <person name="Ghenoiu C."/>
            <person name="Fliegauf M."/>
            <person name="Fekete A."/>
            <person name="Horvath J."/>
            <person name="Koettgen M."/>
            <person name="Hackl M."/>
            <person name="Zschiedrich S."/>
            <person name="Huber T.B."/>
            <person name="Kramer-Zucker A."/>
            <person name="Zentgraf H."/>
            <person name="Blaukat A."/>
            <person name="Walz G."/>
            <person name="Benzing T."/>
        </authorList>
    </citation>
    <scope>INTERACTION WITH NPHP1</scope>
</reference>
<reference key="10">
    <citation type="journal article" date="2007" name="J. Biol. Chem.">
        <title>SorLA/LR11 regulates processing of amyloid precursor protein via interaction with adaptors GGA and PACS-1.</title>
        <authorList>
            <person name="Schmidt V."/>
            <person name="Sporbert A."/>
            <person name="Rohe M."/>
            <person name="Reimer T."/>
            <person name="Rehm A."/>
            <person name="Andersen O.M."/>
            <person name="Willnow T.E."/>
        </authorList>
    </citation>
    <scope>INTERACTION WITH SORL1</scope>
</reference>
<reference key="11">
    <citation type="journal article" date="2007" name="Mol. Cell. Biol.">
        <title>Sorting by the cytoplasmic domain of the amyloid precursor protein binding receptor SorLA.</title>
        <authorList>
            <person name="Nielsen M.S."/>
            <person name="Gustafsen C."/>
            <person name="Madsen P."/>
            <person name="Nyengaard J.R."/>
            <person name="Hermey G."/>
            <person name="Bakke O."/>
            <person name="Mari M."/>
            <person name="Schu P."/>
            <person name="Pohlmann R."/>
            <person name="Dennes A."/>
            <person name="Petersen C.M."/>
        </authorList>
    </citation>
    <scope>INTERACTION WITH SORL1</scope>
</reference>
<reference key="12">
    <citation type="journal article" date="2007" name="Science">
        <title>ATM and ATR substrate analysis reveals extensive protein networks responsive to DNA damage.</title>
        <authorList>
            <person name="Matsuoka S."/>
            <person name="Ballif B.A."/>
            <person name="Smogorzewska A."/>
            <person name="McDonald E.R. III"/>
            <person name="Hurov K.E."/>
            <person name="Luo J."/>
            <person name="Bakalarski C.E."/>
            <person name="Zhao Z."/>
            <person name="Solimini N."/>
            <person name="Lerenthal Y."/>
            <person name="Shiloh Y."/>
            <person name="Gygi S.P."/>
            <person name="Elledge S.J."/>
        </authorList>
    </citation>
    <scope>IDENTIFICATION BY MASS SPECTROMETRY [LARGE SCALE ANALYSIS]</scope>
    <source>
        <tissue>Embryonic kidney</tissue>
    </source>
</reference>
<reference key="13">
    <citation type="journal article" date="2008" name="J. Biol. Chem.">
        <title>HIV-1 Nef binds PACS-2 to assemble a multikinase cascade that triggers major histocompatibility complex class I (MHC-I) down-regulation: analysis using short interfering RNA and knock-out mice.</title>
        <authorList>
            <person name="Atkins K.M."/>
            <person name="Thomas L."/>
            <person name="Youker R.T."/>
            <person name="Harriff M.J."/>
            <person name="Pissani F."/>
            <person name="You H."/>
            <person name="Thomas G."/>
        </authorList>
    </citation>
    <scope>INTERACTION WITH HIV-1 NEF (MICROBIAL INFECTION)</scope>
</reference>
<reference key="14">
    <citation type="journal article" date="2008" name="Mol. Cell">
        <title>Kinase-selective enrichment enables quantitative phosphoproteomics of the kinome across the cell cycle.</title>
        <authorList>
            <person name="Daub H."/>
            <person name="Olsen J.V."/>
            <person name="Bairlein M."/>
            <person name="Gnad F."/>
            <person name="Oppermann F.S."/>
            <person name="Korner R."/>
            <person name="Greff Z."/>
            <person name="Keri G."/>
            <person name="Stemmann O."/>
            <person name="Mann M."/>
        </authorList>
    </citation>
    <scope>IDENTIFICATION BY MASS SPECTROMETRY [LARGE SCALE ANALYSIS]</scope>
    <source>
        <tissue>Cervix carcinoma</tissue>
    </source>
</reference>
<reference key="15">
    <citation type="journal article" date="2008" name="Proc. Natl. Acad. Sci. U.S.A.">
        <title>A quantitative atlas of mitotic phosphorylation.</title>
        <authorList>
            <person name="Dephoure N."/>
            <person name="Zhou C."/>
            <person name="Villen J."/>
            <person name="Beausoleil S.A."/>
            <person name="Bakalarski C.E."/>
            <person name="Elledge S.J."/>
            <person name="Gygi S.P."/>
        </authorList>
    </citation>
    <scope>PHOSPHORYLATION [LARGE SCALE ANALYSIS] AT SER-379; SER-430; THR-504; SER-529 AND SER-534</scope>
    <scope>IDENTIFICATION BY MASS SPECTROMETRY [LARGE SCALE ANALYSIS]</scope>
    <source>
        <tissue>Cervix carcinoma</tissue>
    </source>
</reference>
<reference key="16">
    <citation type="journal article" date="2009" name="Anal. Chem.">
        <title>Lys-N and trypsin cover complementary parts of the phosphoproteome in a refined SCX-based approach.</title>
        <authorList>
            <person name="Gauci S."/>
            <person name="Helbig A.O."/>
            <person name="Slijper M."/>
            <person name="Krijgsveld J."/>
            <person name="Heck A.J."/>
            <person name="Mohammed S."/>
        </authorList>
    </citation>
    <scope>ACETYLATION [LARGE SCALE ANALYSIS] AT ALA-2</scope>
    <scope>CLEAVAGE OF INITIATOR METHIONINE [LARGE SCALE ANALYSIS]</scope>
    <scope>IDENTIFICATION BY MASS SPECTROMETRY [LARGE SCALE ANALYSIS]</scope>
</reference>
<reference key="17">
    <citation type="journal article" date="2009" name="Sci. Signal.">
        <title>Quantitative phosphoproteomic analysis of T cell receptor signaling reveals system-wide modulation of protein-protein interactions.</title>
        <authorList>
            <person name="Mayya V."/>
            <person name="Lundgren D.H."/>
            <person name="Hwang S.-I."/>
            <person name="Rezaul K."/>
            <person name="Wu L."/>
            <person name="Eng J.K."/>
            <person name="Rodionov V."/>
            <person name="Han D.K."/>
        </authorList>
    </citation>
    <scope>IDENTIFICATION BY MASS SPECTROMETRY [LARGE SCALE ANALYSIS]</scope>
    <source>
        <tissue>Leukemic T-cell</tissue>
    </source>
</reference>
<reference key="18">
    <citation type="journal article" date="2010" name="Sci. Signal.">
        <title>Quantitative phosphoproteomics reveals widespread full phosphorylation site occupancy during mitosis.</title>
        <authorList>
            <person name="Olsen J.V."/>
            <person name="Vermeulen M."/>
            <person name="Santamaria A."/>
            <person name="Kumar C."/>
            <person name="Miller M.L."/>
            <person name="Jensen L.J."/>
            <person name="Gnad F."/>
            <person name="Cox J."/>
            <person name="Jensen T.S."/>
            <person name="Nigg E.A."/>
            <person name="Brunak S."/>
            <person name="Mann M."/>
        </authorList>
    </citation>
    <scope>IDENTIFICATION BY MASS SPECTROMETRY [LARGE SCALE ANALYSIS]</scope>
    <source>
        <tissue>Cervix carcinoma</tissue>
    </source>
</reference>
<reference key="19">
    <citation type="journal article" date="2011" name="Sci. Signal.">
        <title>System-wide temporal characterization of the proteome and phosphoproteome of human embryonic stem cell differentiation.</title>
        <authorList>
            <person name="Rigbolt K.T."/>
            <person name="Prokhorova T.A."/>
            <person name="Akimov V."/>
            <person name="Henningsen J."/>
            <person name="Johansen P.T."/>
            <person name="Kratchmarova I."/>
            <person name="Kassem M."/>
            <person name="Mann M."/>
            <person name="Olsen J.V."/>
            <person name="Blagoev B."/>
        </authorList>
    </citation>
    <scope>PHOSPHORYLATION [LARGE SCALE ANALYSIS] AT SER-531</scope>
    <scope>IDENTIFICATION BY MASS SPECTROMETRY [LARGE SCALE ANALYSIS]</scope>
</reference>
<reference key="20">
    <citation type="journal article" date="2012" name="J. Virol.">
        <title>Characterization and intracellular trafficking of Epstein-Barr virus BBLF1, a protein involved in virion maturation.</title>
        <authorList>
            <person name="Chiu Y.F."/>
            <person name="Sugden B."/>
            <person name="Chang P.J."/>
            <person name="Chen L.W."/>
            <person name="Lin Y.J."/>
            <person name="Lan Y.C."/>
            <person name="Lai C.H."/>
            <person name="Liou J.Y."/>
            <person name="Liu S.T."/>
            <person name="Hung C.H."/>
        </authorList>
    </citation>
    <scope>INTERACTION WITH EPSTEIN-BARR VIRUS PROTEIN BBLF1 (MICROBIAL INFECTION)</scope>
</reference>
<reference key="21">
    <citation type="journal article" date="2013" name="J. Proteome Res.">
        <title>Toward a comprehensive characterization of a human cancer cell phosphoproteome.</title>
        <authorList>
            <person name="Zhou H."/>
            <person name="Di Palma S."/>
            <person name="Preisinger C."/>
            <person name="Peng M."/>
            <person name="Polat A.N."/>
            <person name="Heck A.J."/>
            <person name="Mohammed S."/>
        </authorList>
    </citation>
    <scope>PHOSPHORYLATION [LARGE SCALE ANALYSIS] AT SER-430; SER-495; THR-504; SER-519; SER-529 AND SER-534</scope>
    <scope>IDENTIFICATION BY MASS SPECTROMETRY [LARGE SCALE ANALYSIS]</scope>
    <source>
        <tissue>Cervix carcinoma</tissue>
        <tissue>Erythroleukemia</tissue>
    </source>
</reference>
<reference key="22">
    <citation type="journal article" date="2014" name="J. Proteomics">
        <title>An enzyme assisted RP-RPLC approach for in-depth analysis of human liver phosphoproteome.</title>
        <authorList>
            <person name="Bian Y."/>
            <person name="Song C."/>
            <person name="Cheng K."/>
            <person name="Dong M."/>
            <person name="Wang F."/>
            <person name="Huang J."/>
            <person name="Sun D."/>
            <person name="Wang L."/>
            <person name="Ye M."/>
            <person name="Zou H."/>
        </authorList>
    </citation>
    <scope>PHOSPHORYLATION [LARGE SCALE ANALYSIS] AT SER-381</scope>
    <scope>IDENTIFICATION BY MASS SPECTROMETRY [LARGE SCALE ANALYSIS]</scope>
    <source>
        <tissue>Liver</tissue>
    </source>
</reference>
<reference key="23">
    <citation type="journal article" date="2021" name="Hum. Genet.">
        <title>WDR37 syndrome: identification of a distinct new cluster of disease-associated variants and functional analyses of mutant proteins.</title>
        <authorList>
            <person name="Sorokina E.A."/>
            <person name="Reis L.M."/>
            <person name="Thompson S."/>
            <person name="Agre K."/>
            <person name="Babovic-Vuksanovic D."/>
            <person name="Ellingson M.S."/>
            <person name="Hasadsri L."/>
            <person name="van Bever Y."/>
            <person name="Semina E.V."/>
        </authorList>
    </citation>
    <scope>INTERACTION WITH WDR37</scope>
</reference>
<reference key="24">
    <citation type="journal article" date="2012" name="Am. J. Hum. Genet.">
        <title>Recurrent de novo mutations in PACS1 cause defective cranial-neural-crest migration and define a recognizable intellectual-disability syndrome.</title>
        <authorList>
            <person name="Schuurs-Hoeijmakers J.H."/>
            <person name="Oh E.C."/>
            <person name="Vissers L.E."/>
            <person name="Swinkels M.E."/>
            <person name="Gilissen C."/>
            <person name="Willemsen M.A."/>
            <person name="Holvoet M."/>
            <person name="Steehouwer M."/>
            <person name="Veltman J.A."/>
            <person name="de Vries B.B."/>
            <person name="van Bokhoven H."/>
            <person name="de Brouwer A.P."/>
            <person name="Katsanis N."/>
            <person name="Devriendt K."/>
            <person name="Brunner H.G."/>
        </authorList>
    </citation>
    <scope>VARIANT SHMS TRP-203</scope>
</reference>
<gene>
    <name type="primary">PACS1</name>
    <name type="synonym">KIAA1175</name>
</gene>
<keyword id="KW-0007">Acetylation</keyword>
<keyword id="KW-0025">Alternative splicing</keyword>
<keyword id="KW-0175">Coiled coil</keyword>
<keyword id="KW-0225">Disease variant</keyword>
<keyword id="KW-0333">Golgi apparatus</keyword>
<keyword id="KW-0945">Host-virus interaction</keyword>
<keyword id="KW-0991">Intellectual disability</keyword>
<keyword id="KW-0597">Phosphoprotein</keyword>
<keyword id="KW-1267">Proteomics identification</keyword>
<keyword id="KW-1185">Reference proteome</keyword>
<sequence length="963" mass="104898">MAERGGAGGGPGGAGGGSGQRGSGVAQSPQQPPPQQQQQQPPQQPTPPKLAQATSSSSSTSAAAASSSSSSTSTSMAVAVASGSAPPGGPGPGRTPAPVQMNLYATWEVDRSSSSCVPRLFSLTLKKLVMLKEMDKDLNSVVIAVKLQGSKRILRSNEIVLPASGLVETELQLTFSLQYPHFLKRDANKLQIMLQRRKRYKNRTILGYKTLAVGLINMAEVMQHPNEGALVLGLHSNVKDVSVPVAEIKIYSLSSQPIDHEGIKSKLSDRSPDIDNYSEEEEESFSSEQEGSDDPLHGQDLFYEDEDLRKVKKTRRKLTSTSAITRQPNIKQKFVALLKRFKVSDEVGFGLEHVSREQIREVEEDLDELYDSLEMYNPSDSGPEMEETESILSTPKPKLKPFFEGMSQSSSQTEIGSLNSKGSLGKDTTSPMELAALEKIKSTWIKNQDDSLTETDTLEITDQDMFGDASTSLVVPEKVKTPMKSSKTDLQGSASPSKVEGVHTPRQKRSTPLKERQLSKPLSERTNSSDSERSPDLGHSTQIPRKVVYDQLNQILVSDAALPENVILVNTTDWQGQYVAELLQDQRKPVVCTCSTVEVQAVLSALLTRIQRYCNCNSSMPRPVKVAAVGGQSYLSSILRFFVKSLANKTSDWLGYMRFLIIPLGSHPVAKYLGSVDSKYSSSFLDSGWRDLFSRSEPPVSEQLDVAGRVMQYVNGAATTHQLPVAEAMLTCRHKFPDEDSYQKFIPFIGVVKVGLVEDSPSTAGDGDDSPVVSLTVPSTSPPSSSGLSRDATATPPSSPSMSSALAIVGSPNSPYGDVIGLQVDYWLGHPGERRREGDKRDASSKNTLKSVFRSVQVSRLPHSGEAQLSGTMAMTVVTKEKNKKVPTIFLSKKPREKEVDSKSQVIEGISRLICSAKQQQTMLRVSIDGVEWSDIKFFQLAAQWPTHVKHFPVGLFSGSKAT</sequence>
<comment type="function">
    <text evidence="2 6 8">Coat protein that is involved in the localization of trans-Golgi network (TGN) membrane proteins that contain acidic cluster sorting motifs. Controls the endosome-to-Golgi trafficking of furin and mannose-6-phosphate receptor by connecting the acidic-cluster-containing cytoplasmic domain of these molecules with the adapter-protein complex-1 (AP-1) of endosomal clathrin-coated membrane pits. Involved in HIV-1 nef-mediated removal of MHC-I from the cell surface to the TGN. Required for normal ER Ca2+ handling in lymphocytes. Together with WDR37, it plays an essential role in lymphocyte development, quiescence and survival. Required for stabilizing peripheral lymphocyte populations (By similarity).</text>
</comment>
<comment type="subunit">
    <text evidence="2 6 8 9 10 11 15">Associates with AP-1 and AP-3 but not with AP-2 complexes (PubMed:11331585). Interacts with FURIN (By similarity). Forms a ternary complex with FURIN and AP-1 (PubMed:11331585). Interacts with NPHP1; the interaction is dependent of NPHP1 phosphorylation by CK2 (PubMed:16308564). Interacts with PKD2 (via acidic region) (PubMed:15692563). Interacts with SORL1 (PubMed:17646382, PubMed:17855360). Interacts with WDR37 (PubMed:34642815).</text>
</comment>
<comment type="subunit">
    <text evidence="5 7 12">(Microbial infection) Interacts with HIV-1 Nef.</text>
</comment>
<comment type="subunit">
    <text evidence="13">(Microbial infection) Interacts with Epstein-barr virus protein BBLF1.</text>
</comment>
<comment type="interaction">
    <interactant intactId="EBI-2555014">
        <id>Q6VY07</id>
    </interactant>
    <interactant intactId="EBI-21535880">
        <id>Q92870-2</id>
        <label>APBB2</label>
    </interactant>
    <organismsDiffer>false</organismsDiffer>
    <experiments>3</experiments>
</comment>
<comment type="interaction">
    <interactant intactId="EBI-2555014">
        <id>Q6VY07</id>
    </interactant>
    <interactant intactId="EBI-930964">
        <id>P54253</id>
        <label>ATXN1</label>
    </interactant>
    <organismsDiffer>false</organismsDiffer>
    <experiments>6</experiments>
</comment>
<comment type="interaction">
    <interactant intactId="EBI-2555014">
        <id>Q6VY07</id>
    </interactant>
    <interactant intactId="EBI-348169">
        <id>P67870</id>
        <label>CSNK2B</label>
    </interactant>
    <organismsDiffer>false</organismsDiffer>
    <experiments>3</experiments>
</comment>
<comment type="interaction">
    <interactant intactId="EBI-2555014">
        <id>Q6VY07</id>
    </interactant>
    <interactant intactId="EBI-447404">
        <id>Q9NZ52</id>
        <label>GGA3</label>
    </interactant>
    <organismsDiffer>false</organismsDiffer>
    <experiments>5</experiments>
</comment>
<comment type="interaction">
    <interactant intactId="EBI-2555014">
        <id>Q6VY07</id>
    </interactant>
    <interactant intactId="EBI-466029">
        <id>P42858</id>
        <label>HTT</label>
    </interactant>
    <organismsDiffer>false</organismsDiffer>
    <experiments>18</experiments>
</comment>
<comment type="interaction">
    <interactant intactId="EBI-2555014">
        <id>Q6VY07</id>
    </interactant>
    <interactant intactId="EBI-1048580">
        <id>P11717</id>
        <label>IGF2R</label>
    </interactant>
    <organismsDiffer>false</organismsDiffer>
    <experiments>2</experiments>
</comment>
<comment type="interaction">
    <interactant intactId="EBI-2555014">
        <id>Q6VY07</id>
    </interactant>
    <interactant intactId="EBI-50433196">
        <id>A0A6Q8PF08</id>
        <label>PMP22</label>
    </interactant>
    <organismsDiffer>false</organismsDiffer>
    <experiments>3</experiments>
</comment>
<comment type="interaction">
    <interactant intactId="EBI-2555014">
        <id>Q6VY07</id>
    </interactant>
    <interactant intactId="EBI-985879">
        <id>P37840</id>
        <label>SNCA</label>
    </interactant>
    <organismsDiffer>false</organismsDiffer>
    <experiments>3</experiments>
</comment>
<comment type="interaction">
    <interactant intactId="EBI-2555014">
        <id>Q6VY07</id>
    </interactant>
    <interactant intactId="EBI-372899">
        <id>Q13148</id>
        <label>TARDBP</label>
    </interactant>
    <organismsDiffer>false</organismsDiffer>
    <experiments>6</experiments>
</comment>
<comment type="subcellular location">
    <subcellularLocation>
        <location evidence="1">Golgi apparatus</location>
        <location evidence="1">trans-Golgi network</location>
    </subcellularLocation>
    <text evidence="18">Localizes in the perinuclear region, probably the TGN.</text>
</comment>
<comment type="alternative products">
    <event type="alternative splicing"/>
    <isoform>
        <id>Q6VY07-1</id>
        <name>1</name>
        <sequence type="displayed"/>
    </isoform>
    <isoform>
        <id>Q6VY07-2</id>
        <name>2</name>
        <sequence type="described" ref="VSP_011557"/>
    </isoform>
</comment>
<comment type="disease" evidence="14">
    <disease id="DI-03667">
        <name>Schuurs-Hoeijmakers syndrome</name>
        <acronym>SHMS</acronym>
        <description>An autosomal dominant intellectual developmental disorder characterized by intellectual disability in combination with distinct craniofacial features and genital abnormalities.</description>
        <dbReference type="MIM" id="615009"/>
    </disease>
    <text>The disease is caused by variants affecting the gene represented in this entry.</text>
</comment>
<comment type="similarity">
    <text evidence="17">Belongs to the PACS family.</text>
</comment>
<comment type="sequence caution" evidence="17">
    <conflict type="erroneous initiation">
        <sequence resource="EMBL-CDS" id="AAH09936"/>
    </conflict>
    <text>Extended N-terminus.</text>
</comment>
<comment type="sequence caution" evidence="17">
    <conflict type="erroneous initiation">
        <sequence resource="EMBL-CDS" id="BAB71164"/>
    </conflict>
    <text>Truncated N-terminus.</text>
</comment>
<evidence type="ECO:0000250" key="1">
    <source>
        <dbReference type="UniProtKB" id="O88588"/>
    </source>
</evidence>
<evidence type="ECO:0000250" key="2">
    <source>
        <dbReference type="UniProtKB" id="Q8K212"/>
    </source>
</evidence>
<evidence type="ECO:0000255" key="3"/>
<evidence type="ECO:0000256" key="4">
    <source>
        <dbReference type="SAM" id="MobiDB-lite"/>
    </source>
</evidence>
<evidence type="ECO:0000269" key="5">
    <source>
    </source>
</evidence>
<evidence type="ECO:0000269" key="6">
    <source>
    </source>
</evidence>
<evidence type="ECO:0000269" key="7">
    <source>
    </source>
</evidence>
<evidence type="ECO:0000269" key="8">
    <source>
    </source>
</evidence>
<evidence type="ECO:0000269" key="9">
    <source>
    </source>
</evidence>
<evidence type="ECO:0000269" key="10">
    <source>
    </source>
</evidence>
<evidence type="ECO:0000269" key="11">
    <source>
    </source>
</evidence>
<evidence type="ECO:0000269" key="12">
    <source>
    </source>
</evidence>
<evidence type="ECO:0000269" key="13">
    <source>
    </source>
</evidence>
<evidence type="ECO:0000269" key="14">
    <source>
    </source>
</evidence>
<evidence type="ECO:0000269" key="15">
    <source>
    </source>
</evidence>
<evidence type="ECO:0000303" key="16">
    <source>
    </source>
</evidence>
<evidence type="ECO:0000305" key="17"/>
<evidence type="ECO:0000305" key="18">
    <source>
    </source>
</evidence>
<evidence type="ECO:0007744" key="19">
    <source>
    </source>
</evidence>
<evidence type="ECO:0007744" key="20">
    <source>
    </source>
</evidence>
<evidence type="ECO:0007744" key="21">
    <source>
    </source>
</evidence>
<evidence type="ECO:0007744" key="22">
    <source>
    </source>
</evidence>
<evidence type="ECO:0007744" key="23">
    <source>
    </source>
</evidence>
<accession>Q6VY07</accession>
<accession>Q6PJY6</accession>
<accession>Q6PKB6</accession>
<accession>Q7Z590</accession>
<accession>Q7Z5W4</accession>
<accession>Q8N8K6</accession>
<accession>Q96MW0</accession>
<accession>Q9NW92</accession>
<accession>Q9ULP5</accession>
<protein>
    <recommendedName>
        <fullName>Phosphofurin acidic cluster sorting protein 1</fullName>
        <shortName>PACS-1</shortName>
    </recommendedName>
</protein>
<organism>
    <name type="scientific">Homo sapiens</name>
    <name type="common">Human</name>
    <dbReference type="NCBI Taxonomy" id="9606"/>
    <lineage>
        <taxon>Eukaryota</taxon>
        <taxon>Metazoa</taxon>
        <taxon>Chordata</taxon>
        <taxon>Craniata</taxon>
        <taxon>Vertebrata</taxon>
        <taxon>Euteleostomi</taxon>
        <taxon>Mammalia</taxon>
        <taxon>Eutheria</taxon>
        <taxon>Euarchontoglires</taxon>
        <taxon>Primates</taxon>
        <taxon>Haplorrhini</taxon>
        <taxon>Catarrhini</taxon>
        <taxon>Hominidae</taxon>
        <taxon>Homo</taxon>
    </lineage>
</organism>